<sequence length="473" mass="53107">MNWEMVIGLEVHIQLSTKSKLFSTSATKYGQHQNTQAAFLDLGLPGTLPIVNKEAIRKAVIFGLAVDAKISKDSFFARKNYFYPDLSKGYQISQSTNPIVQEGRLEIETSKGLKTIRIERAHLEEDAGKSVHGYIAGETGLDYNRAGTPLLEIVTYPDFRSAEEVVAYLKKLHQLVKHLGICDGNMQEGSFRCDVNLSIRPQGQAKFGTRAELKNINSFRFIDKAIEYEYARQVSVLESGGEVVQETRLYDADANETRSMRAKEDAFDYRYFPDPDLLPLVITDEYIESIKKQMPLKSEEREAVYREHLAEQEVEFLLSNLEIADYYDKVAVVIGYKPAYNWITVDLISTLNRAEKEFSSDVVPAEILLEIIANVQKDIISQANAKKVIAEYIDAPSAIEAIIEKLGLKQVSDEGMIRELVQGIIAANPQQAADFKAGKTKLMSFFVGQAMKASKGKANPKQVNQIVQEELNK</sequence>
<name>GATB_FRATM</name>
<reference key="1">
    <citation type="journal article" date="2009" name="PLoS Pathog.">
        <title>Molecular evolutionary consequences of niche restriction in Francisella tularensis, a facultative intracellular pathogen.</title>
        <authorList>
            <person name="Larsson P."/>
            <person name="Elfsmark D."/>
            <person name="Svensson K."/>
            <person name="Wikstroem P."/>
            <person name="Forsman M."/>
            <person name="Brettin T."/>
            <person name="Keim P."/>
            <person name="Johansson A."/>
        </authorList>
    </citation>
    <scope>NUCLEOTIDE SEQUENCE [LARGE SCALE GENOMIC DNA]</scope>
    <source>
        <strain>FSC147</strain>
    </source>
</reference>
<feature type="chain" id="PRO_1000095212" description="Aspartyl/glutamyl-tRNA(Asn/Gln) amidotransferase subunit B">
    <location>
        <begin position="1"/>
        <end position="473"/>
    </location>
</feature>
<evidence type="ECO:0000255" key="1">
    <source>
        <dbReference type="HAMAP-Rule" id="MF_00121"/>
    </source>
</evidence>
<keyword id="KW-0067">ATP-binding</keyword>
<keyword id="KW-0436">Ligase</keyword>
<keyword id="KW-0547">Nucleotide-binding</keyword>
<keyword id="KW-0648">Protein biosynthesis</keyword>
<organism>
    <name type="scientific">Francisella tularensis subsp. mediasiatica (strain FSC147)</name>
    <dbReference type="NCBI Taxonomy" id="441952"/>
    <lineage>
        <taxon>Bacteria</taxon>
        <taxon>Pseudomonadati</taxon>
        <taxon>Pseudomonadota</taxon>
        <taxon>Gammaproteobacteria</taxon>
        <taxon>Thiotrichales</taxon>
        <taxon>Francisellaceae</taxon>
        <taxon>Francisella</taxon>
    </lineage>
</organism>
<accession>B2SEM7</accession>
<protein>
    <recommendedName>
        <fullName evidence="1">Aspartyl/glutamyl-tRNA(Asn/Gln) amidotransferase subunit B</fullName>
        <shortName evidence="1">Asp/Glu-ADT subunit B</shortName>
        <ecNumber evidence="1">6.3.5.-</ecNumber>
    </recommendedName>
</protein>
<proteinExistence type="inferred from homology"/>
<gene>
    <name evidence="1" type="primary">gatB</name>
    <name type="ordered locus">FTM_0085</name>
</gene>
<comment type="function">
    <text evidence="1">Allows the formation of correctly charged Asn-tRNA(Asn) or Gln-tRNA(Gln) through the transamidation of misacylated Asp-tRNA(Asn) or Glu-tRNA(Gln) in organisms which lack either or both of asparaginyl-tRNA or glutaminyl-tRNA synthetases. The reaction takes place in the presence of glutamine and ATP through an activated phospho-Asp-tRNA(Asn) or phospho-Glu-tRNA(Gln).</text>
</comment>
<comment type="catalytic activity">
    <reaction evidence="1">
        <text>L-glutamyl-tRNA(Gln) + L-glutamine + ATP + H2O = L-glutaminyl-tRNA(Gln) + L-glutamate + ADP + phosphate + H(+)</text>
        <dbReference type="Rhea" id="RHEA:17521"/>
        <dbReference type="Rhea" id="RHEA-COMP:9681"/>
        <dbReference type="Rhea" id="RHEA-COMP:9684"/>
        <dbReference type="ChEBI" id="CHEBI:15377"/>
        <dbReference type="ChEBI" id="CHEBI:15378"/>
        <dbReference type="ChEBI" id="CHEBI:29985"/>
        <dbReference type="ChEBI" id="CHEBI:30616"/>
        <dbReference type="ChEBI" id="CHEBI:43474"/>
        <dbReference type="ChEBI" id="CHEBI:58359"/>
        <dbReference type="ChEBI" id="CHEBI:78520"/>
        <dbReference type="ChEBI" id="CHEBI:78521"/>
        <dbReference type="ChEBI" id="CHEBI:456216"/>
    </reaction>
</comment>
<comment type="catalytic activity">
    <reaction evidence="1">
        <text>L-aspartyl-tRNA(Asn) + L-glutamine + ATP + H2O = L-asparaginyl-tRNA(Asn) + L-glutamate + ADP + phosphate + 2 H(+)</text>
        <dbReference type="Rhea" id="RHEA:14513"/>
        <dbReference type="Rhea" id="RHEA-COMP:9674"/>
        <dbReference type="Rhea" id="RHEA-COMP:9677"/>
        <dbReference type="ChEBI" id="CHEBI:15377"/>
        <dbReference type="ChEBI" id="CHEBI:15378"/>
        <dbReference type="ChEBI" id="CHEBI:29985"/>
        <dbReference type="ChEBI" id="CHEBI:30616"/>
        <dbReference type="ChEBI" id="CHEBI:43474"/>
        <dbReference type="ChEBI" id="CHEBI:58359"/>
        <dbReference type="ChEBI" id="CHEBI:78515"/>
        <dbReference type="ChEBI" id="CHEBI:78516"/>
        <dbReference type="ChEBI" id="CHEBI:456216"/>
    </reaction>
</comment>
<comment type="subunit">
    <text evidence="1">Heterotrimer of A, B and C subunits.</text>
</comment>
<comment type="similarity">
    <text evidence="1">Belongs to the GatB/GatE family. GatB subfamily.</text>
</comment>
<dbReference type="EC" id="6.3.5.-" evidence="1"/>
<dbReference type="EMBL" id="CP000915">
    <property type="protein sequence ID" value="ACD30186.1"/>
    <property type="molecule type" value="Genomic_DNA"/>
</dbReference>
<dbReference type="SMR" id="B2SEM7"/>
<dbReference type="KEGG" id="ftm:FTM_0085"/>
<dbReference type="HOGENOM" id="CLU_019240_0_0_6"/>
<dbReference type="GO" id="GO:0050566">
    <property type="term" value="F:asparaginyl-tRNA synthase (glutamine-hydrolyzing) activity"/>
    <property type="evidence" value="ECO:0007669"/>
    <property type="project" value="RHEA"/>
</dbReference>
<dbReference type="GO" id="GO:0005524">
    <property type="term" value="F:ATP binding"/>
    <property type="evidence" value="ECO:0007669"/>
    <property type="project" value="UniProtKB-KW"/>
</dbReference>
<dbReference type="GO" id="GO:0050567">
    <property type="term" value="F:glutaminyl-tRNA synthase (glutamine-hydrolyzing) activity"/>
    <property type="evidence" value="ECO:0007669"/>
    <property type="project" value="UniProtKB-UniRule"/>
</dbReference>
<dbReference type="GO" id="GO:0070681">
    <property type="term" value="P:glutaminyl-tRNAGln biosynthesis via transamidation"/>
    <property type="evidence" value="ECO:0007669"/>
    <property type="project" value="TreeGrafter"/>
</dbReference>
<dbReference type="GO" id="GO:0006412">
    <property type="term" value="P:translation"/>
    <property type="evidence" value="ECO:0007669"/>
    <property type="project" value="UniProtKB-UniRule"/>
</dbReference>
<dbReference type="FunFam" id="1.10.10.410:FF:000001">
    <property type="entry name" value="Aspartyl/glutamyl-tRNA(Asn/Gln) amidotransferase subunit B"/>
    <property type="match status" value="1"/>
</dbReference>
<dbReference type="Gene3D" id="1.10.10.410">
    <property type="match status" value="1"/>
</dbReference>
<dbReference type="HAMAP" id="MF_00121">
    <property type="entry name" value="GatB"/>
    <property type="match status" value="1"/>
</dbReference>
<dbReference type="InterPro" id="IPR017959">
    <property type="entry name" value="Asn/Gln-tRNA_amidoTrfase_suB/E"/>
</dbReference>
<dbReference type="InterPro" id="IPR006075">
    <property type="entry name" value="Asn/Gln-tRNA_Trfase_suB/E_cat"/>
</dbReference>
<dbReference type="InterPro" id="IPR018027">
    <property type="entry name" value="Asn/Gln_amidotransferase"/>
</dbReference>
<dbReference type="InterPro" id="IPR003789">
    <property type="entry name" value="Asn/Gln_tRNA_amidoTrase-B-like"/>
</dbReference>
<dbReference type="InterPro" id="IPR004413">
    <property type="entry name" value="GatB"/>
</dbReference>
<dbReference type="InterPro" id="IPR023168">
    <property type="entry name" value="GatB_Yqey_C_2"/>
</dbReference>
<dbReference type="InterPro" id="IPR017958">
    <property type="entry name" value="Gln-tRNA_amidoTrfase_suB_CS"/>
</dbReference>
<dbReference type="InterPro" id="IPR014746">
    <property type="entry name" value="Gln_synth/guanido_kin_cat_dom"/>
</dbReference>
<dbReference type="NCBIfam" id="TIGR00133">
    <property type="entry name" value="gatB"/>
    <property type="match status" value="1"/>
</dbReference>
<dbReference type="NCBIfam" id="NF004012">
    <property type="entry name" value="PRK05477.1-2"/>
    <property type="match status" value="1"/>
</dbReference>
<dbReference type="NCBIfam" id="NF004014">
    <property type="entry name" value="PRK05477.1-4"/>
    <property type="match status" value="1"/>
</dbReference>
<dbReference type="PANTHER" id="PTHR11659">
    <property type="entry name" value="GLUTAMYL-TRNA GLN AMIDOTRANSFERASE SUBUNIT B MITOCHONDRIAL AND PROKARYOTIC PET112-RELATED"/>
    <property type="match status" value="1"/>
</dbReference>
<dbReference type="PANTHER" id="PTHR11659:SF0">
    <property type="entry name" value="GLUTAMYL-TRNA(GLN) AMIDOTRANSFERASE SUBUNIT B, MITOCHONDRIAL"/>
    <property type="match status" value="1"/>
</dbReference>
<dbReference type="Pfam" id="PF02934">
    <property type="entry name" value="GatB_N"/>
    <property type="match status" value="1"/>
</dbReference>
<dbReference type="Pfam" id="PF02637">
    <property type="entry name" value="GatB_Yqey"/>
    <property type="match status" value="1"/>
</dbReference>
<dbReference type="SMART" id="SM00845">
    <property type="entry name" value="GatB_Yqey"/>
    <property type="match status" value="1"/>
</dbReference>
<dbReference type="SUPFAM" id="SSF89095">
    <property type="entry name" value="GatB/YqeY motif"/>
    <property type="match status" value="1"/>
</dbReference>
<dbReference type="SUPFAM" id="SSF55931">
    <property type="entry name" value="Glutamine synthetase/guanido kinase"/>
    <property type="match status" value="1"/>
</dbReference>
<dbReference type="PROSITE" id="PS01234">
    <property type="entry name" value="GATB"/>
    <property type="match status" value="1"/>
</dbReference>